<evidence type="ECO:0000255" key="1">
    <source>
        <dbReference type="HAMAP-Rule" id="MF_01200"/>
    </source>
</evidence>
<organism>
    <name type="scientific">Latilactobacillus sakei subsp. sakei (strain 23K)</name>
    <name type="common">Lactobacillus sakei subsp. sakei</name>
    <dbReference type="NCBI Taxonomy" id="314315"/>
    <lineage>
        <taxon>Bacteria</taxon>
        <taxon>Bacillati</taxon>
        <taxon>Bacillota</taxon>
        <taxon>Bacilli</taxon>
        <taxon>Lactobacillales</taxon>
        <taxon>Lactobacillaceae</taxon>
        <taxon>Latilactobacillus</taxon>
    </lineage>
</organism>
<protein>
    <recommendedName>
        <fullName evidence="1">Orotidine 5'-phosphate decarboxylase</fullName>
        <ecNumber evidence="1">4.1.1.23</ecNumber>
    </recommendedName>
    <alternativeName>
        <fullName evidence="1">OMP decarboxylase</fullName>
        <shortName evidence="1">OMPDCase</shortName>
        <shortName evidence="1">OMPdecase</shortName>
    </alternativeName>
</protein>
<name>PYRF_LATSS</name>
<sequence length="239" mass="26179">MTNPVIIALDFPNWQKTDQFLQQFPKDEALFVKIGMELFYQEGPQLIKTLKARDYRIFLDLKLYDIPNTVQSAMTVIGQLGVDYTTIHAAGGQTMLQAGAAGLKAGAKQANVKPAKLLAITQLTSTNEAQMQQEQLVSVSLPESVAHYAQLAQQSDCDGVICSAQEITTIKSKTATDFLCVTPGIRPATSQNNDQKRAVTPLEAAQMHSNGIVVGRPITQASDPYQAYQAIKSEWESFK</sequence>
<proteinExistence type="inferred from homology"/>
<feature type="chain" id="PRO_0000241870" description="Orotidine 5'-phosphate decarboxylase">
    <location>
        <begin position="1"/>
        <end position="239"/>
    </location>
</feature>
<feature type="active site" description="Proton donor" evidence="1">
    <location>
        <position position="62"/>
    </location>
</feature>
<feature type="binding site" evidence="1">
    <location>
        <position position="10"/>
    </location>
    <ligand>
        <name>substrate</name>
    </ligand>
</feature>
<feature type="binding site" evidence="1">
    <location>
        <position position="33"/>
    </location>
    <ligand>
        <name>substrate</name>
    </ligand>
</feature>
<feature type="binding site" evidence="1">
    <location>
        <begin position="60"/>
        <end position="69"/>
    </location>
    <ligand>
        <name>substrate</name>
    </ligand>
</feature>
<feature type="binding site" evidence="1">
    <location>
        <position position="124"/>
    </location>
    <ligand>
        <name>substrate</name>
    </ligand>
</feature>
<feature type="binding site" evidence="1">
    <location>
        <position position="186"/>
    </location>
    <ligand>
        <name>substrate</name>
    </ligand>
</feature>
<feature type="binding site" evidence="1">
    <location>
        <position position="195"/>
    </location>
    <ligand>
        <name>substrate</name>
    </ligand>
</feature>
<feature type="binding site" evidence="1">
    <location>
        <position position="215"/>
    </location>
    <ligand>
        <name>substrate</name>
    </ligand>
</feature>
<feature type="binding site" evidence="1">
    <location>
        <position position="216"/>
    </location>
    <ligand>
        <name>substrate</name>
    </ligand>
</feature>
<gene>
    <name evidence="1" type="primary">pyrF</name>
    <name type="ordered locus">LCA_0958</name>
</gene>
<accession>Q38X21</accession>
<comment type="function">
    <text evidence="1">Catalyzes the decarboxylation of orotidine 5'-monophosphate (OMP) to uridine 5'-monophosphate (UMP).</text>
</comment>
<comment type="catalytic activity">
    <reaction evidence="1">
        <text>orotidine 5'-phosphate + H(+) = UMP + CO2</text>
        <dbReference type="Rhea" id="RHEA:11596"/>
        <dbReference type="ChEBI" id="CHEBI:15378"/>
        <dbReference type="ChEBI" id="CHEBI:16526"/>
        <dbReference type="ChEBI" id="CHEBI:57538"/>
        <dbReference type="ChEBI" id="CHEBI:57865"/>
        <dbReference type="EC" id="4.1.1.23"/>
    </reaction>
</comment>
<comment type="pathway">
    <text evidence="1">Pyrimidine metabolism; UMP biosynthesis via de novo pathway; UMP from orotate: step 2/2.</text>
</comment>
<comment type="subunit">
    <text evidence="1">Homodimer.</text>
</comment>
<comment type="similarity">
    <text evidence="1">Belongs to the OMP decarboxylase family. Type 1 subfamily.</text>
</comment>
<dbReference type="EC" id="4.1.1.23" evidence="1"/>
<dbReference type="EMBL" id="CR936503">
    <property type="protein sequence ID" value="CAI55260.1"/>
    <property type="molecule type" value="Genomic_DNA"/>
</dbReference>
<dbReference type="RefSeq" id="WP_011374660.1">
    <property type="nucleotide sequence ID" value="NC_007576.1"/>
</dbReference>
<dbReference type="SMR" id="Q38X21"/>
<dbReference type="STRING" id="314315.LCA_0958"/>
<dbReference type="KEGG" id="lsa:LCA_0958"/>
<dbReference type="eggNOG" id="COG0284">
    <property type="taxonomic scope" value="Bacteria"/>
</dbReference>
<dbReference type="HOGENOM" id="CLU_067069_1_1_9"/>
<dbReference type="OrthoDB" id="9806203at2"/>
<dbReference type="UniPathway" id="UPA00070">
    <property type="reaction ID" value="UER00120"/>
</dbReference>
<dbReference type="Proteomes" id="UP000002707">
    <property type="component" value="Chromosome"/>
</dbReference>
<dbReference type="GO" id="GO:0005829">
    <property type="term" value="C:cytosol"/>
    <property type="evidence" value="ECO:0007669"/>
    <property type="project" value="TreeGrafter"/>
</dbReference>
<dbReference type="GO" id="GO:0004590">
    <property type="term" value="F:orotidine-5'-phosphate decarboxylase activity"/>
    <property type="evidence" value="ECO:0007669"/>
    <property type="project" value="UniProtKB-UniRule"/>
</dbReference>
<dbReference type="GO" id="GO:0006207">
    <property type="term" value="P:'de novo' pyrimidine nucleobase biosynthetic process"/>
    <property type="evidence" value="ECO:0007669"/>
    <property type="project" value="InterPro"/>
</dbReference>
<dbReference type="GO" id="GO:0044205">
    <property type="term" value="P:'de novo' UMP biosynthetic process"/>
    <property type="evidence" value="ECO:0007669"/>
    <property type="project" value="UniProtKB-UniRule"/>
</dbReference>
<dbReference type="CDD" id="cd04725">
    <property type="entry name" value="OMP_decarboxylase_like"/>
    <property type="match status" value="1"/>
</dbReference>
<dbReference type="FunFam" id="3.20.20.70:FF:000015">
    <property type="entry name" value="Orotidine 5'-phosphate decarboxylase"/>
    <property type="match status" value="1"/>
</dbReference>
<dbReference type="Gene3D" id="3.20.20.70">
    <property type="entry name" value="Aldolase class I"/>
    <property type="match status" value="1"/>
</dbReference>
<dbReference type="HAMAP" id="MF_01200_B">
    <property type="entry name" value="OMPdecase_type1_B"/>
    <property type="match status" value="1"/>
</dbReference>
<dbReference type="InterPro" id="IPR013785">
    <property type="entry name" value="Aldolase_TIM"/>
</dbReference>
<dbReference type="InterPro" id="IPR014732">
    <property type="entry name" value="OMPdecase"/>
</dbReference>
<dbReference type="InterPro" id="IPR018089">
    <property type="entry name" value="OMPdecase_AS"/>
</dbReference>
<dbReference type="InterPro" id="IPR047596">
    <property type="entry name" value="OMPdecase_bac"/>
</dbReference>
<dbReference type="InterPro" id="IPR001754">
    <property type="entry name" value="OMPdeCOase_dom"/>
</dbReference>
<dbReference type="InterPro" id="IPR011060">
    <property type="entry name" value="RibuloseP-bd_barrel"/>
</dbReference>
<dbReference type="NCBIfam" id="NF001273">
    <property type="entry name" value="PRK00230.1"/>
    <property type="match status" value="1"/>
</dbReference>
<dbReference type="NCBIfam" id="TIGR01740">
    <property type="entry name" value="pyrF"/>
    <property type="match status" value="1"/>
</dbReference>
<dbReference type="PANTHER" id="PTHR32119">
    <property type="entry name" value="OROTIDINE 5'-PHOSPHATE DECARBOXYLASE"/>
    <property type="match status" value="1"/>
</dbReference>
<dbReference type="PANTHER" id="PTHR32119:SF2">
    <property type="entry name" value="OROTIDINE 5'-PHOSPHATE DECARBOXYLASE"/>
    <property type="match status" value="1"/>
</dbReference>
<dbReference type="Pfam" id="PF00215">
    <property type="entry name" value="OMPdecase"/>
    <property type="match status" value="1"/>
</dbReference>
<dbReference type="SMART" id="SM00934">
    <property type="entry name" value="OMPdecase"/>
    <property type="match status" value="1"/>
</dbReference>
<dbReference type="SUPFAM" id="SSF51366">
    <property type="entry name" value="Ribulose-phoshate binding barrel"/>
    <property type="match status" value="1"/>
</dbReference>
<dbReference type="PROSITE" id="PS00156">
    <property type="entry name" value="OMPDECASE"/>
    <property type="match status" value="1"/>
</dbReference>
<reference key="1">
    <citation type="journal article" date="2005" name="Nat. Biotechnol.">
        <title>The complete genome sequence of the meat-borne lactic acid bacterium Lactobacillus sakei 23K.</title>
        <authorList>
            <person name="Chaillou S."/>
            <person name="Champomier-Verges M.-C."/>
            <person name="Cornet M."/>
            <person name="Crutz-Le Coq A.-M."/>
            <person name="Dudez A.-M."/>
            <person name="Martin V."/>
            <person name="Beaufils S."/>
            <person name="Darbon-Rongere E."/>
            <person name="Bossy R."/>
            <person name="Loux V."/>
            <person name="Zagorec M."/>
        </authorList>
    </citation>
    <scope>NUCLEOTIDE SEQUENCE [LARGE SCALE GENOMIC DNA]</scope>
    <source>
        <strain>23K</strain>
    </source>
</reference>
<keyword id="KW-0210">Decarboxylase</keyword>
<keyword id="KW-0456">Lyase</keyword>
<keyword id="KW-0665">Pyrimidine biosynthesis</keyword>
<keyword id="KW-1185">Reference proteome</keyword>